<protein>
    <recommendedName>
        <fullName evidence="1">Phosphopentomutase</fullName>
        <ecNumber evidence="1">5.4.2.7</ecNumber>
    </recommendedName>
    <alternativeName>
        <fullName evidence="1">Phosphodeoxyribomutase</fullName>
    </alternativeName>
</protein>
<gene>
    <name evidence="1" type="primary">deoB</name>
    <name type="synonym">drm</name>
    <name type="synonym">thyR</name>
    <name type="ordered locus">c5467</name>
</gene>
<evidence type="ECO:0000255" key="1">
    <source>
        <dbReference type="HAMAP-Rule" id="MF_00740"/>
    </source>
</evidence>
<evidence type="ECO:0000305" key="2"/>
<name>DEOB_ECOL6</name>
<proteinExistence type="inferred from homology"/>
<keyword id="KW-0963">Cytoplasm</keyword>
<keyword id="KW-0413">Isomerase</keyword>
<keyword id="KW-0464">Manganese</keyword>
<keyword id="KW-0479">Metal-binding</keyword>
<keyword id="KW-1185">Reference proteome</keyword>
<dbReference type="EC" id="5.4.2.7" evidence="1"/>
<dbReference type="EMBL" id="AE014075">
    <property type="protein sequence ID" value="AAN83887.1"/>
    <property type="molecule type" value="Genomic_DNA"/>
</dbReference>
<dbReference type="RefSeq" id="WP_000816471.1">
    <property type="nucleotide sequence ID" value="NZ_CP051263.1"/>
</dbReference>
<dbReference type="SMR" id="P0A6K7"/>
<dbReference type="STRING" id="199310.c5467"/>
<dbReference type="GeneID" id="89519362"/>
<dbReference type="KEGG" id="ecc:c5467"/>
<dbReference type="eggNOG" id="COG1015">
    <property type="taxonomic scope" value="Bacteria"/>
</dbReference>
<dbReference type="HOGENOM" id="CLU_053861_0_0_6"/>
<dbReference type="BioCyc" id="ECOL199310:C5467-MONOMER"/>
<dbReference type="UniPathway" id="UPA00002">
    <property type="reaction ID" value="UER00467"/>
</dbReference>
<dbReference type="Proteomes" id="UP000001410">
    <property type="component" value="Chromosome"/>
</dbReference>
<dbReference type="GO" id="GO:0005829">
    <property type="term" value="C:cytosol"/>
    <property type="evidence" value="ECO:0007669"/>
    <property type="project" value="TreeGrafter"/>
</dbReference>
<dbReference type="GO" id="GO:0000287">
    <property type="term" value="F:magnesium ion binding"/>
    <property type="evidence" value="ECO:0007669"/>
    <property type="project" value="InterPro"/>
</dbReference>
<dbReference type="GO" id="GO:0030145">
    <property type="term" value="F:manganese ion binding"/>
    <property type="evidence" value="ECO:0007669"/>
    <property type="project" value="UniProtKB-UniRule"/>
</dbReference>
<dbReference type="GO" id="GO:0008973">
    <property type="term" value="F:phosphopentomutase activity"/>
    <property type="evidence" value="ECO:0007669"/>
    <property type="project" value="UniProtKB-UniRule"/>
</dbReference>
<dbReference type="GO" id="GO:0006018">
    <property type="term" value="P:2-deoxyribose 1-phosphate catabolic process"/>
    <property type="evidence" value="ECO:0007669"/>
    <property type="project" value="UniProtKB-UniRule"/>
</dbReference>
<dbReference type="GO" id="GO:0006015">
    <property type="term" value="P:5-phosphoribose 1-diphosphate biosynthetic process"/>
    <property type="evidence" value="ECO:0007669"/>
    <property type="project" value="UniProtKB-UniPathway"/>
</dbReference>
<dbReference type="GO" id="GO:0043094">
    <property type="term" value="P:metabolic compound salvage"/>
    <property type="evidence" value="ECO:0007669"/>
    <property type="project" value="InterPro"/>
</dbReference>
<dbReference type="GO" id="GO:0009117">
    <property type="term" value="P:nucleotide metabolic process"/>
    <property type="evidence" value="ECO:0007669"/>
    <property type="project" value="InterPro"/>
</dbReference>
<dbReference type="CDD" id="cd16009">
    <property type="entry name" value="PPM"/>
    <property type="match status" value="1"/>
</dbReference>
<dbReference type="FunFam" id="3.30.70.1250:FF:000001">
    <property type="entry name" value="Phosphopentomutase"/>
    <property type="match status" value="1"/>
</dbReference>
<dbReference type="Gene3D" id="3.40.720.10">
    <property type="entry name" value="Alkaline Phosphatase, subunit A"/>
    <property type="match status" value="1"/>
</dbReference>
<dbReference type="Gene3D" id="3.30.70.1250">
    <property type="entry name" value="Phosphopentomutase"/>
    <property type="match status" value="1"/>
</dbReference>
<dbReference type="HAMAP" id="MF_00740">
    <property type="entry name" value="Phosphopentomut"/>
    <property type="match status" value="1"/>
</dbReference>
<dbReference type="InterPro" id="IPR017850">
    <property type="entry name" value="Alkaline_phosphatase_core_sf"/>
</dbReference>
<dbReference type="InterPro" id="IPR010045">
    <property type="entry name" value="DeoB"/>
</dbReference>
<dbReference type="InterPro" id="IPR006124">
    <property type="entry name" value="Metalloenzyme"/>
</dbReference>
<dbReference type="InterPro" id="IPR024052">
    <property type="entry name" value="Phosphopentomutase_DeoB_cap_sf"/>
</dbReference>
<dbReference type="NCBIfam" id="TIGR01696">
    <property type="entry name" value="deoB"/>
    <property type="match status" value="1"/>
</dbReference>
<dbReference type="NCBIfam" id="NF003766">
    <property type="entry name" value="PRK05362.1"/>
    <property type="match status" value="1"/>
</dbReference>
<dbReference type="PANTHER" id="PTHR21110">
    <property type="entry name" value="PHOSPHOPENTOMUTASE"/>
    <property type="match status" value="1"/>
</dbReference>
<dbReference type="PANTHER" id="PTHR21110:SF0">
    <property type="entry name" value="PHOSPHOPENTOMUTASE"/>
    <property type="match status" value="1"/>
</dbReference>
<dbReference type="Pfam" id="PF01676">
    <property type="entry name" value="Metalloenzyme"/>
    <property type="match status" value="1"/>
</dbReference>
<dbReference type="PIRSF" id="PIRSF001491">
    <property type="entry name" value="Ppentomutase"/>
    <property type="match status" value="1"/>
</dbReference>
<dbReference type="SUPFAM" id="SSF53649">
    <property type="entry name" value="Alkaline phosphatase-like"/>
    <property type="match status" value="1"/>
</dbReference>
<dbReference type="SUPFAM" id="SSF143856">
    <property type="entry name" value="DeoB insert domain-like"/>
    <property type="match status" value="1"/>
</dbReference>
<comment type="function">
    <text evidence="1">Isomerase that catalyzes the conversion of deoxy-ribose 1-phosphate (dRib-1-P) and ribose 1-phosphate (Rib-1-P) to deoxy-ribose 5-phosphate (dRib-5-P) and ribose 5-phosphate (Rib-5-P), respectively.</text>
</comment>
<comment type="catalytic activity">
    <reaction evidence="1">
        <text>2-deoxy-alpha-D-ribose 1-phosphate = 2-deoxy-D-ribose 5-phosphate</text>
        <dbReference type="Rhea" id="RHEA:27658"/>
        <dbReference type="ChEBI" id="CHEBI:57259"/>
        <dbReference type="ChEBI" id="CHEBI:62877"/>
        <dbReference type="EC" id="5.4.2.7"/>
    </reaction>
</comment>
<comment type="catalytic activity">
    <reaction evidence="1">
        <text>alpha-D-ribose 1-phosphate = D-ribose 5-phosphate</text>
        <dbReference type="Rhea" id="RHEA:18793"/>
        <dbReference type="ChEBI" id="CHEBI:57720"/>
        <dbReference type="ChEBI" id="CHEBI:78346"/>
        <dbReference type="EC" id="5.4.2.7"/>
    </reaction>
</comment>
<comment type="cofactor">
    <cofactor evidence="1">
        <name>Mn(2+)</name>
        <dbReference type="ChEBI" id="CHEBI:29035"/>
    </cofactor>
    <text evidence="1">Binds 2 manganese ions.</text>
</comment>
<comment type="pathway">
    <text evidence="1">Carbohydrate degradation; 2-deoxy-D-ribose 1-phosphate degradation; D-glyceraldehyde 3-phosphate and acetaldehyde from 2-deoxy-alpha-D-ribose 1-phosphate: step 1/2.</text>
</comment>
<comment type="subcellular location">
    <subcellularLocation>
        <location evidence="1">Cytoplasm</location>
    </subcellularLocation>
</comment>
<comment type="similarity">
    <text evidence="1 2">Belongs to the phosphopentomutase family.</text>
</comment>
<organism>
    <name type="scientific">Escherichia coli O6:H1 (strain CFT073 / ATCC 700928 / UPEC)</name>
    <dbReference type="NCBI Taxonomy" id="199310"/>
    <lineage>
        <taxon>Bacteria</taxon>
        <taxon>Pseudomonadati</taxon>
        <taxon>Pseudomonadota</taxon>
        <taxon>Gammaproteobacteria</taxon>
        <taxon>Enterobacterales</taxon>
        <taxon>Enterobacteriaceae</taxon>
        <taxon>Escherichia</taxon>
    </lineage>
</organism>
<sequence>MKRAFIMVLDSFGIGATEDAERFGDVGADTLGHIAEACAKGEADNGRKGPLNLPNLTRLGLAKAHEGSTGFIPAGMDGNAEVIGAYAWAHEMSSGKDTPSGHWEIAGVPVLFEWGYFSDHENSFPQELLDKLVERANLPGYLGNCHSSGTVILDQLGEEHMKTGKPIFYTSADSVFQIACHEETFGLDKLYELCEIAREELTNGGYNIGRVIARPFIGDKAGNFQRTGNRHDLAVEPPAPTVLQKLVDEKHGQVVSVGKIADIYANCGITKKVKATGLDALFDATIKEMKEAGDNTIVFTNFVDFDSSWGHRRDVAGYAAGLELFDRRLPELMSLLRDDDILILTADHGCDPTWTGTDHTREHIPVLVYGPKVKPGSLGHRETFADIGQTLAKYFGTSDMEYGKAMF</sequence>
<feature type="chain" id="PRO_0000199820" description="Phosphopentomutase">
    <location>
        <begin position="1"/>
        <end position="407"/>
    </location>
</feature>
<feature type="binding site" evidence="1">
    <location>
        <position position="10"/>
    </location>
    <ligand>
        <name>Mn(2+)</name>
        <dbReference type="ChEBI" id="CHEBI:29035"/>
        <label>1</label>
    </ligand>
</feature>
<feature type="binding site" evidence="1">
    <location>
        <position position="306"/>
    </location>
    <ligand>
        <name>Mn(2+)</name>
        <dbReference type="ChEBI" id="CHEBI:29035"/>
        <label>2</label>
    </ligand>
</feature>
<feature type="binding site" evidence="1">
    <location>
        <position position="311"/>
    </location>
    <ligand>
        <name>Mn(2+)</name>
        <dbReference type="ChEBI" id="CHEBI:29035"/>
        <label>2</label>
    </ligand>
</feature>
<feature type="binding site" evidence="1">
    <location>
        <position position="347"/>
    </location>
    <ligand>
        <name>Mn(2+)</name>
        <dbReference type="ChEBI" id="CHEBI:29035"/>
        <label>1</label>
    </ligand>
</feature>
<feature type="binding site" evidence="1">
    <location>
        <position position="348"/>
    </location>
    <ligand>
        <name>Mn(2+)</name>
        <dbReference type="ChEBI" id="CHEBI:29035"/>
        <label>1</label>
    </ligand>
</feature>
<feature type="binding site" evidence="1">
    <location>
        <position position="359"/>
    </location>
    <ligand>
        <name>Mn(2+)</name>
        <dbReference type="ChEBI" id="CHEBI:29035"/>
        <label>2</label>
    </ligand>
</feature>
<accession>P0A6K7</accession>
<accession>P07651</accession>
<reference key="1">
    <citation type="journal article" date="2002" name="Proc. Natl. Acad. Sci. U.S.A.">
        <title>Extensive mosaic structure revealed by the complete genome sequence of uropathogenic Escherichia coli.</title>
        <authorList>
            <person name="Welch R.A."/>
            <person name="Burland V."/>
            <person name="Plunkett G. III"/>
            <person name="Redford P."/>
            <person name="Roesch P."/>
            <person name="Rasko D."/>
            <person name="Buckles E.L."/>
            <person name="Liou S.-R."/>
            <person name="Boutin A."/>
            <person name="Hackett J."/>
            <person name="Stroud D."/>
            <person name="Mayhew G.F."/>
            <person name="Rose D.J."/>
            <person name="Zhou S."/>
            <person name="Schwartz D.C."/>
            <person name="Perna N.T."/>
            <person name="Mobley H.L.T."/>
            <person name="Donnenberg M.S."/>
            <person name="Blattner F.R."/>
        </authorList>
    </citation>
    <scope>NUCLEOTIDE SEQUENCE [LARGE SCALE GENOMIC DNA]</scope>
    <source>
        <strain>CFT073 / ATCC 700928 / UPEC</strain>
    </source>
</reference>